<reference key="1">
    <citation type="submission" date="2006-03" db="EMBL/GenBank/DDBJ databases">
        <title>Complete sequence of chromosome of Nitrobacter hamburgensis X14.</title>
        <authorList>
            <consortium name="US DOE Joint Genome Institute"/>
            <person name="Copeland A."/>
            <person name="Lucas S."/>
            <person name="Lapidus A."/>
            <person name="Barry K."/>
            <person name="Detter J.C."/>
            <person name="Glavina del Rio T."/>
            <person name="Hammon N."/>
            <person name="Israni S."/>
            <person name="Dalin E."/>
            <person name="Tice H."/>
            <person name="Pitluck S."/>
            <person name="Chain P."/>
            <person name="Malfatti S."/>
            <person name="Shin M."/>
            <person name="Vergez L."/>
            <person name="Schmutz J."/>
            <person name="Larimer F."/>
            <person name="Land M."/>
            <person name="Hauser L."/>
            <person name="Kyrpides N."/>
            <person name="Ivanova N."/>
            <person name="Ward B."/>
            <person name="Arp D."/>
            <person name="Klotz M."/>
            <person name="Stein L."/>
            <person name="O'Mullan G."/>
            <person name="Starkenburg S."/>
            <person name="Sayavedra L."/>
            <person name="Poret-Peterson A.T."/>
            <person name="Gentry M.E."/>
            <person name="Bruce D."/>
            <person name="Richardson P."/>
        </authorList>
    </citation>
    <scope>NUCLEOTIDE SEQUENCE [LARGE SCALE GENOMIC DNA]</scope>
    <source>
        <strain>DSM 10229 / NCIMB 13809 / X14</strain>
    </source>
</reference>
<dbReference type="EMBL" id="CP000319">
    <property type="protein sequence ID" value="ABE63840.1"/>
    <property type="molecule type" value="Genomic_DNA"/>
</dbReference>
<dbReference type="RefSeq" id="WP_011511499.1">
    <property type="nucleotide sequence ID" value="NC_007964.1"/>
</dbReference>
<dbReference type="SMR" id="Q1QIV7"/>
<dbReference type="STRING" id="323097.Nham_3103"/>
<dbReference type="KEGG" id="nha:Nham_3103"/>
<dbReference type="eggNOG" id="COG1825">
    <property type="taxonomic scope" value="Bacteria"/>
</dbReference>
<dbReference type="HOGENOM" id="CLU_075939_0_0_5"/>
<dbReference type="OrthoDB" id="9806411at2"/>
<dbReference type="Proteomes" id="UP000001953">
    <property type="component" value="Chromosome"/>
</dbReference>
<dbReference type="GO" id="GO:0022625">
    <property type="term" value="C:cytosolic large ribosomal subunit"/>
    <property type="evidence" value="ECO:0007669"/>
    <property type="project" value="TreeGrafter"/>
</dbReference>
<dbReference type="GO" id="GO:0008097">
    <property type="term" value="F:5S rRNA binding"/>
    <property type="evidence" value="ECO:0007669"/>
    <property type="project" value="InterPro"/>
</dbReference>
<dbReference type="GO" id="GO:0003735">
    <property type="term" value="F:structural constituent of ribosome"/>
    <property type="evidence" value="ECO:0007669"/>
    <property type="project" value="InterPro"/>
</dbReference>
<dbReference type="GO" id="GO:0006412">
    <property type="term" value="P:translation"/>
    <property type="evidence" value="ECO:0007669"/>
    <property type="project" value="UniProtKB-UniRule"/>
</dbReference>
<dbReference type="CDD" id="cd00495">
    <property type="entry name" value="Ribosomal_L25_TL5_CTC"/>
    <property type="match status" value="1"/>
</dbReference>
<dbReference type="Gene3D" id="2.170.120.20">
    <property type="entry name" value="Ribosomal protein L25, beta domain"/>
    <property type="match status" value="1"/>
</dbReference>
<dbReference type="Gene3D" id="2.40.240.10">
    <property type="entry name" value="Ribosomal Protein L25, Chain P"/>
    <property type="match status" value="1"/>
</dbReference>
<dbReference type="HAMAP" id="MF_01334">
    <property type="entry name" value="Ribosomal_bL25_CTC"/>
    <property type="match status" value="1"/>
</dbReference>
<dbReference type="InterPro" id="IPR020056">
    <property type="entry name" value="Rbsml_bL25/Gln-tRNA_synth_N"/>
</dbReference>
<dbReference type="InterPro" id="IPR011035">
    <property type="entry name" value="Ribosomal_bL25/Gln-tRNA_synth"/>
</dbReference>
<dbReference type="InterPro" id="IPR020057">
    <property type="entry name" value="Ribosomal_bL25_b-dom"/>
</dbReference>
<dbReference type="InterPro" id="IPR037121">
    <property type="entry name" value="Ribosomal_bL25_C"/>
</dbReference>
<dbReference type="InterPro" id="IPR001021">
    <property type="entry name" value="Ribosomal_bL25_long"/>
</dbReference>
<dbReference type="InterPro" id="IPR029751">
    <property type="entry name" value="Ribosomal_L25_dom"/>
</dbReference>
<dbReference type="InterPro" id="IPR020930">
    <property type="entry name" value="Ribosomal_uL5_bac-type"/>
</dbReference>
<dbReference type="NCBIfam" id="TIGR00731">
    <property type="entry name" value="bL25_bact_ctc"/>
    <property type="match status" value="1"/>
</dbReference>
<dbReference type="NCBIfam" id="NF004128">
    <property type="entry name" value="PRK05618.1-2"/>
    <property type="match status" value="1"/>
</dbReference>
<dbReference type="PANTHER" id="PTHR33284">
    <property type="entry name" value="RIBOSOMAL PROTEIN L25/GLN-TRNA SYNTHETASE, ANTI-CODON-BINDING DOMAIN-CONTAINING PROTEIN"/>
    <property type="match status" value="1"/>
</dbReference>
<dbReference type="PANTHER" id="PTHR33284:SF1">
    <property type="entry name" value="RIBOSOMAL PROTEIN L25_GLN-TRNA SYNTHETASE, ANTI-CODON-BINDING DOMAIN-CONTAINING PROTEIN"/>
    <property type="match status" value="1"/>
</dbReference>
<dbReference type="Pfam" id="PF01386">
    <property type="entry name" value="Ribosomal_L25p"/>
    <property type="match status" value="1"/>
</dbReference>
<dbReference type="Pfam" id="PF14693">
    <property type="entry name" value="Ribosomal_TL5_C"/>
    <property type="match status" value="1"/>
</dbReference>
<dbReference type="SUPFAM" id="SSF50715">
    <property type="entry name" value="Ribosomal protein L25-like"/>
    <property type="match status" value="1"/>
</dbReference>
<proteinExistence type="inferred from homology"/>
<accession>Q1QIV7</accession>
<protein>
    <recommendedName>
        <fullName evidence="1">Large ribosomal subunit protein bL25</fullName>
    </recommendedName>
    <alternativeName>
        <fullName evidence="3">50S ribosomal protein L25</fullName>
    </alternativeName>
    <alternativeName>
        <fullName evidence="1">General stress protein CTC</fullName>
    </alternativeName>
</protein>
<name>RL25_NITHX</name>
<organism>
    <name type="scientific">Nitrobacter hamburgensis (strain DSM 10229 / NCIMB 13809 / X14)</name>
    <dbReference type="NCBI Taxonomy" id="323097"/>
    <lineage>
        <taxon>Bacteria</taxon>
        <taxon>Pseudomonadati</taxon>
        <taxon>Pseudomonadota</taxon>
        <taxon>Alphaproteobacteria</taxon>
        <taxon>Hyphomicrobiales</taxon>
        <taxon>Nitrobacteraceae</taxon>
        <taxon>Nitrobacter</taxon>
    </lineage>
</organism>
<gene>
    <name evidence="1" type="primary">rplY</name>
    <name evidence="1" type="synonym">ctc</name>
    <name type="ordered locus">Nham_3103</name>
</gene>
<feature type="chain" id="PRO_1000052908" description="Large ribosomal subunit protein bL25">
    <location>
        <begin position="1"/>
        <end position="233"/>
    </location>
</feature>
<feature type="region of interest" description="Disordered" evidence="2">
    <location>
        <begin position="1"/>
        <end position="23"/>
    </location>
</feature>
<keyword id="KW-1185">Reference proteome</keyword>
<keyword id="KW-0687">Ribonucleoprotein</keyword>
<keyword id="KW-0689">Ribosomal protein</keyword>
<keyword id="KW-0694">RNA-binding</keyword>
<keyword id="KW-0699">rRNA-binding</keyword>
<evidence type="ECO:0000255" key="1">
    <source>
        <dbReference type="HAMAP-Rule" id="MF_01334"/>
    </source>
</evidence>
<evidence type="ECO:0000256" key="2">
    <source>
        <dbReference type="SAM" id="MobiDB-lite"/>
    </source>
</evidence>
<evidence type="ECO:0000305" key="3"/>
<sequence length="233" mass="24194">MATVRELKATARPKSGKGAARAERRAGRVPGVIYGNNQPPQPISVEEPELRQRILAGRFLTTVFDISLEGKKHRVIPRDFHLDPVKDFPIHVDFLRLGEGATIRVSIPIRLLKADVAPGVKRGGTVNLVIHAIDVECAADDIPQFIEADVGGLEMSHSLHLSDVELPPGVKPLAREDMTLVTIVPPSGYAEEVKAAAAAAAAGTAAPAAGAAPAAGAAAAGAKAPAGGGDKKK</sequence>
<comment type="function">
    <text evidence="1">This is one of the proteins that binds to the 5S RNA in the ribosome where it forms part of the central protuberance.</text>
</comment>
<comment type="subunit">
    <text evidence="1">Part of the 50S ribosomal subunit; part of the 5S rRNA/L5/L18/L25 subcomplex. Contacts the 5S rRNA. Binds to the 5S rRNA independently of L5 and L18.</text>
</comment>
<comment type="similarity">
    <text evidence="1">Belongs to the bacterial ribosomal protein bL25 family. CTC subfamily.</text>
</comment>